<protein>
    <recommendedName>
        <fullName evidence="1">2,3-bisphosphoglycerate-independent phosphoglycerate mutase</fullName>
        <shortName evidence="1">BPG-independent PGAM</shortName>
        <shortName evidence="1">Phosphoglyceromutase</shortName>
        <shortName evidence="1">iPGM</shortName>
        <ecNumber evidence="1">5.4.2.12</ecNumber>
    </recommendedName>
</protein>
<name>GPMI_LISMO</name>
<accession>Q8Y4I4</accession>
<proteinExistence type="inferred from homology"/>
<comment type="function">
    <text evidence="1">Catalyzes the interconversion of 2-phosphoglycerate and 3-phosphoglycerate.</text>
</comment>
<comment type="catalytic activity">
    <reaction evidence="1">
        <text>(2R)-2-phosphoglycerate = (2R)-3-phosphoglycerate</text>
        <dbReference type="Rhea" id="RHEA:15901"/>
        <dbReference type="ChEBI" id="CHEBI:58272"/>
        <dbReference type="ChEBI" id="CHEBI:58289"/>
        <dbReference type="EC" id="5.4.2.12"/>
    </reaction>
</comment>
<comment type="cofactor">
    <cofactor evidence="1">
        <name>Mn(2+)</name>
        <dbReference type="ChEBI" id="CHEBI:29035"/>
    </cofactor>
    <text evidence="1">Binds 2 manganese ions per subunit.</text>
</comment>
<comment type="pathway">
    <text evidence="1">Carbohydrate degradation; glycolysis; pyruvate from D-glyceraldehyde 3-phosphate: step 3/5.</text>
</comment>
<comment type="subunit">
    <text evidence="1">Monomer.</text>
</comment>
<comment type="similarity">
    <text evidence="1">Belongs to the BPG-independent phosphoglycerate mutase family.</text>
</comment>
<reference key="1">
    <citation type="journal article" date="2001" name="Science">
        <title>Comparative genomics of Listeria species.</title>
        <authorList>
            <person name="Glaser P."/>
            <person name="Frangeul L."/>
            <person name="Buchrieser C."/>
            <person name="Rusniok C."/>
            <person name="Amend A."/>
            <person name="Baquero F."/>
            <person name="Berche P."/>
            <person name="Bloecker H."/>
            <person name="Brandt P."/>
            <person name="Chakraborty T."/>
            <person name="Charbit A."/>
            <person name="Chetouani F."/>
            <person name="Couve E."/>
            <person name="de Daruvar A."/>
            <person name="Dehoux P."/>
            <person name="Domann E."/>
            <person name="Dominguez-Bernal G."/>
            <person name="Duchaud E."/>
            <person name="Durant L."/>
            <person name="Dussurget O."/>
            <person name="Entian K.-D."/>
            <person name="Fsihi H."/>
            <person name="Garcia-del Portillo F."/>
            <person name="Garrido P."/>
            <person name="Gautier L."/>
            <person name="Goebel W."/>
            <person name="Gomez-Lopez N."/>
            <person name="Hain T."/>
            <person name="Hauf J."/>
            <person name="Jackson D."/>
            <person name="Jones L.-M."/>
            <person name="Kaerst U."/>
            <person name="Kreft J."/>
            <person name="Kuhn M."/>
            <person name="Kunst F."/>
            <person name="Kurapkat G."/>
            <person name="Madueno E."/>
            <person name="Maitournam A."/>
            <person name="Mata Vicente J."/>
            <person name="Ng E."/>
            <person name="Nedjari H."/>
            <person name="Nordsiek G."/>
            <person name="Novella S."/>
            <person name="de Pablos B."/>
            <person name="Perez-Diaz J.-C."/>
            <person name="Purcell R."/>
            <person name="Remmel B."/>
            <person name="Rose M."/>
            <person name="Schlueter T."/>
            <person name="Simoes N."/>
            <person name="Tierrez A."/>
            <person name="Vazquez-Boland J.-A."/>
            <person name="Voss H."/>
            <person name="Wehland J."/>
            <person name="Cossart P."/>
        </authorList>
    </citation>
    <scope>NUCLEOTIDE SEQUENCE [LARGE SCALE GENOMIC DNA]</scope>
    <source>
        <strain>ATCC BAA-679 / EGD-e</strain>
    </source>
</reference>
<feature type="chain" id="PRO_0000212163" description="2,3-bisphosphoglycerate-independent phosphoglycerate mutase">
    <location>
        <begin position="1"/>
        <end position="510"/>
    </location>
</feature>
<feature type="active site" description="Phosphoserine intermediate" evidence="1">
    <location>
        <position position="62"/>
    </location>
</feature>
<feature type="binding site" evidence="1">
    <location>
        <position position="12"/>
    </location>
    <ligand>
        <name>Mn(2+)</name>
        <dbReference type="ChEBI" id="CHEBI:29035"/>
        <label>2</label>
    </ligand>
</feature>
<feature type="binding site" evidence="1">
    <location>
        <position position="62"/>
    </location>
    <ligand>
        <name>Mn(2+)</name>
        <dbReference type="ChEBI" id="CHEBI:29035"/>
        <label>2</label>
    </ligand>
</feature>
<feature type="binding site" evidence="1">
    <location>
        <position position="123"/>
    </location>
    <ligand>
        <name>substrate</name>
    </ligand>
</feature>
<feature type="binding site" evidence="1">
    <location>
        <begin position="153"/>
        <end position="154"/>
    </location>
    <ligand>
        <name>substrate</name>
    </ligand>
</feature>
<feature type="binding site" evidence="1">
    <location>
        <position position="185"/>
    </location>
    <ligand>
        <name>substrate</name>
    </ligand>
</feature>
<feature type="binding site" evidence="1">
    <location>
        <position position="191"/>
    </location>
    <ligand>
        <name>substrate</name>
    </ligand>
</feature>
<feature type="binding site" evidence="1">
    <location>
        <begin position="260"/>
        <end position="263"/>
    </location>
    <ligand>
        <name>substrate</name>
    </ligand>
</feature>
<feature type="binding site" evidence="1">
    <location>
        <position position="335"/>
    </location>
    <ligand>
        <name>substrate</name>
    </ligand>
</feature>
<feature type="binding site" evidence="1">
    <location>
        <position position="402"/>
    </location>
    <ligand>
        <name>Mn(2+)</name>
        <dbReference type="ChEBI" id="CHEBI:29035"/>
        <label>1</label>
    </ligand>
</feature>
<feature type="binding site" evidence="1">
    <location>
        <position position="406"/>
    </location>
    <ligand>
        <name>Mn(2+)</name>
        <dbReference type="ChEBI" id="CHEBI:29035"/>
        <label>1</label>
    </ligand>
</feature>
<feature type="binding site" evidence="1">
    <location>
        <position position="443"/>
    </location>
    <ligand>
        <name>Mn(2+)</name>
        <dbReference type="ChEBI" id="CHEBI:29035"/>
        <label>2</label>
    </ligand>
</feature>
<feature type="binding site" evidence="1">
    <location>
        <position position="444"/>
    </location>
    <ligand>
        <name>Mn(2+)</name>
        <dbReference type="ChEBI" id="CHEBI:29035"/>
        <label>2</label>
    </ligand>
</feature>
<feature type="binding site" evidence="1">
    <location>
        <position position="461"/>
    </location>
    <ligand>
        <name>Mn(2+)</name>
        <dbReference type="ChEBI" id="CHEBI:29035"/>
        <label>1</label>
    </ligand>
</feature>
<sequence length="510" mass="56139">MSKSPVAIIILDGFGKRAETVGNAVAQANKPNFDRYWADFPHGELKAAGLDVGLPEGQMGNSEVGHTNIGAGRIVYQSLTRIDKAIEEGEFQENKALNNAFTHTKENNSDLHLFGLLSDGGVHSHINHLVALLETAKDKGVKNVYIHAFLDGRDVAPQSSLEYLETLQKAISDLNYGAIATVSGRFYAMDRDKRWERVEKAYKAIVSAEGEKFEDPIELVKASYANDKNDEFVVPAIITKDGKPVATVKDNDAVIFFNFRPDRAIQLSNAFTDKEWDHFDRGADHPKNIKFVTMTLYNPSIDAEVAFEPIEMKNVIGEVLSNEGLSQLRIAETEKYPHVTFFMNGGRNEEFPGENRILINSPKVETYDLQPEMSAYEVTDALVEDIKNDKHDAIILNFANPDMVGHSGMLEPTIKAIEAVDENLGRVVDLILEKGGSAIIFADHGNSETMSTPEGKPHTAHTTVPVPVIVTKKGVTLREGGRLADVAPTMLDLLGVKKPAEMTGESLIQK</sequence>
<keyword id="KW-0324">Glycolysis</keyword>
<keyword id="KW-0413">Isomerase</keyword>
<keyword id="KW-0464">Manganese</keyword>
<keyword id="KW-0479">Metal-binding</keyword>
<keyword id="KW-1185">Reference proteome</keyword>
<gene>
    <name evidence="1" type="primary">gpmI</name>
    <name type="synonym">pgm</name>
    <name type="ordered locus">lmo2456</name>
</gene>
<evidence type="ECO:0000255" key="1">
    <source>
        <dbReference type="HAMAP-Rule" id="MF_01038"/>
    </source>
</evidence>
<dbReference type="EC" id="5.4.2.12" evidence="1"/>
<dbReference type="EMBL" id="AL591983">
    <property type="protein sequence ID" value="CAD00534.1"/>
    <property type="molecule type" value="Genomic_DNA"/>
</dbReference>
<dbReference type="PIR" id="AH1381">
    <property type="entry name" value="AH1381"/>
</dbReference>
<dbReference type="RefSeq" id="NP_465979.1">
    <property type="nucleotide sequence ID" value="NC_003210.1"/>
</dbReference>
<dbReference type="RefSeq" id="WP_009930391.1">
    <property type="nucleotide sequence ID" value="NZ_CP149495.1"/>
</dbReference>
<dbReference type="SMR" id="Q8Y4I4"/>
<dbReference type="STRING" id="169963.gene:17595166"/>
<dbReference type="PaxDb" id="169963-lmo2456"/>
<dbReference type="EnsemblBacteria" id="CAD00534">
    <property type="protein sequence ID" value="CAD00534"/>
    <property type="gene ID" value="CAD00534"/>
</dbReference>
<dbReference type="GeneID" id="987381"/>
<dbReference type="KEGG" id="lmo:lmo2456"/>
<dbReference type="PATRIC" id="fig|169963.11.peg.2515"/>
<dbReference type="eggNOG" id="COG0696">
    <property type="taxonomic scope" value="Bacteria"/>
</dbReference>
<dbReference type="HOGENOM" id="CLU_026099_2_0_9"/>
<dbReference type="OrthoDB" id="9800863at2"/>
<dbReference type="PhylomeDB" id="Q8Y4I4"/>
<dbReference type="BioCyc" id="LMON169963:LMO2456-MONOMER"/>
<dbReference type="UniPathway" id="UPA00109">
    <property type="reaction ID" value="UER00186"/>
</dbReference>
<dbReference type="Proteomes" id="UP000000817">
    <property type="component" value="Chromosome"/>
</dbReference>
<dbReference type="GO" id="GO:0005829">
    <property type="term" value="C:cytosol"/>
    <property type="evidence" value="ECO:0000318"/>
    <property type="project" value="GO_Central"/>
</dbReference>
<dbReference type="GO" id="GO:0030145">
    <property type="term" value="F:manganese ion binding"/>
    <property type="evidence" value="ECO:0000318"/>
    <property type="project" value="GO_Central"/>
</dbReference>
<dbReference type="GO" id="GO:0004619">
    <property type="term" value="F:phosphoglycerate mutase activity"/>
    <property type="evidence" value="ECO:0000318"/>
    <property type="project" value="GO_Central"/>
</dbReference>
<dbReference type="GO" id="GO:0005975">
    <property type="term" value="P:carbohydrate metabolic process"/>
    <property type="evidence" value="ECO:0000318"/>
    <property type="project" value="GO_Central"/>
</dbReference>
<dbReference type="GO" id="GO:0006007">
    <property type="term" value="P:glucose catabolic process"/>
    <property type="evidence" value="ECO:0007669"/>
    <property type="project" value="InterPro"/>
</dbReference>
<dbReference type="GO" id="GO:0006096">
    <property type="term" value="P:glycolytic process"/>
    <property type="evidence" value="ECO:0007669"/>
    <property type="project" value="UniProtKB-UniRule"/>
</dbReference>
<dbReference type="CDD" id="cd16010">
    <property type="entry name" value="iPGM"/>
    <property type="match status" value="1"/>
</dbReference>
<dbReference type="FunFam" id="3.40.1450.10:FF:000001">
    <property type="entry name" value="2,3-bisphosphoglycerate-independent phosphoglycerate mutase"/>
    <property type="match status" value="1"/>
</dbReference>
<dbReference type="FunFam" id="3.40.720.10:FF:000001">
    <property type="entry name" value="2,3-bisphosphoglycerate-independent phosphoglycerate mutase"/>
    <property type="match status" value="1"/>
</dbReference>
<dbReference type="Gene3D" id="3.40.720.10">
    <property type="entry name" value="Alkaline Phosphatase, subunit A"/>
    <property type="match status" value="1"/>
</dbReference>
<dbReference type="Gene3D" id="3.40.1450.10">
    <property type="entry name" value="BPG-independent phosphoglycerate mutase, domain B"/>
    <property type="match status" value="1"/>
</dbReference>
<dbReference type="HAMAP" id="MF_01038">
    <property type="entry name" value="GpmI"/>
    <property type="match status" value="1"/>
</dbReference>
<dbReference type="InterPro" id="IPR017850">
    <property type="entry name" value="Alkaline_phosphatase_core_sf"/>
</dbReference>
<dbReference type="InterPro" id="IPR011258">
    <property type="entry name" value="BPG-indep_PGM_N"/>
</dbReference>
<dbReference type="InterPro" id="IPR006124">
    <property type="entry name" value="Metalloenzyme"/>
</dbReference>
<dbReference type="InterPro" id="IPR036646">
    <property type="entry name" value="PGAM_B_sf"/>
</dbReference>
<dbReference type="InterPro" id="IPR005995">
    <property type="entry name" value="Pgm_bpd_ind"/>
</dbReference>
<dbReference type="NCBIfam" id="TIGR01307">
    <property type="entry name" value="pgm_bpd_ind"/>
    <property type="match status" value="1"/>
</dbReference>
<dbReference type="PANTHER" id="PTHR31637">
    <property type="entry name" value="2,3-BISPHOSPHOGLYCERATE-INDEPENDENT PHOSPHOGLYCERATE MUTASE"/>
    <property type="match status" value="1"/>
</dbReference>
<dbReference type="PANTHER" id="PTHR31637:SF0">
    <property type="entry name" value="2,3-BISPHOSPHOGLYCERATE-INDEPENDENT PHOSPHOGLYCERATE MUTASE"/>
    <property type="match status" value="1"/>
</dbReference>
<dbReference type="Pfam" id="PF06415">
    <property type="entry name" value="iPGM_N"/>
    <property type="match status" value="1"/>
</dbReference>
<dbReference type="Pfam" id="PF01676">
    <property type="entry name" value="Metalloenzyme"/>
    <property type="match status" value="1"/>
</dbReference>
<dbReference type="PIRSF" id="PIRSF001492">
    <property type="entry name" value="IPGAM"/>
    <property type="match status" value="1"/>
</dbReference>
<dbReference type="SUPFAM" id="SSF64158">
    <property type="entry name" value="2,3-Bisphosphoglycerate-independent phosphoglycerate mutase, substrate-binding domain"/>
    <property type="match status" value="1"/>
</dbReference>
<dbReference type="SUPFAM" id="SSF53649">
    <property type="entry name" value="Alkaline phosphatase-like"/>
    <property type="match status" value="1"/>
</dbReference>
<organism>
    <name type="scientific">Listeria monocytogenes serovar 1/2a (strain ATCC BAA-679 / EGD-e)</name>
    <dbReference type="NCBI Taxonomy" id="169963"/>
    <lineage>
        <taxon>Bacteria</taxon>
        <taxon>Bacillati</taxon>
        <taxon>Bacillota</taxon>
        <taxon>Bacilli</taxon>
        <taxon>Bacillales</taxon>
        <taxon>Listeriaceae</taxon>
        <taxon>Listeria</taxon>
    </lineage>
</organism>